<evidence type="ECO:0000255" key="1">
    <source>
        <dbReference type="HAMAP-Rule" id="MF_00686"/>
    </source>
</evidence>
<gene>
    <name type="ordered locus">Bfl248</name>
</gene>
<feature type="chain" id="PRO_0000214475" description="Probable Fe(2+)-trafficking protein">
    <location>
        <begin position="1"/>
        <end position="79"/>
    </location>
</feature>
<protein>
    <recommendedName>
        <fullName evidence="1">Probable Fe(2+)-trafficking protein</fullName>
    </recommendedName>
</protein>
<sequence>MTKIIYCIYLKKYAEGLKFPCYPGKLGEYIYKNISQEAWNKWQNVQTILINENKLNMLCAKDRSIIEKKMKKFLCLKPL</sequence>
<accession>Q7VRG9</accession>
<comment type="function">
    <text evidence="1">Could be a mediator in iron transactions between iron acquisition and iron-requiring processes, such as synthesis and/or repair of Fe-S clusters in biosynthetic enzymes.</text>
</comment>
<comment type="subunit">
    <text evidence="1">Monomer.</text>
</comment>
<comment type="similarity">
    <text evidence="1">Belongs to the Fe(2+)-trafficking protein family.</text>
</comment>
<dbReference type="EMBL" id="BX248583">
    <property type="protein sequence ID" value="CAD83319.1"/>
    <property type="molecule type" value="Genomic_DNA"/>
</dbReference>
<dbReference type="SMR" id="Q7VRG9"/>
<dbReference type="STRING" id="203907.Bfl248"/>
<dbReference type="KEGG" id="bfl:Bfl248"/>
<dbReference type="eggNOG" id="COG2924">
    <property type="taxonomic scope" value="Bacteria"/>
</dbReference>
<dbReference type="HOGENOM" id="CLU_170994_0_0_6"/>
<dbReference type="OrthoDB" id="9804318at2"/>
<dbReference type="Proteomes" id="UP000002192">
    <property type="component" value="Chromosome"/>
</dbReference>
<dbReference type="GO" id="GO:0005829">
    <property type="term" value="C:cytosol"/>
    <property type="evidence" value="ECO:0007669"/>
    <property type="project" value="TreeGrafter"/>
</dbReference>
<dbReference type="GO" id="GO:0005506">
    <property type="term" value="F:iron ion binding"/>
    <property type="evidence" value="ECO:0007669"/>
    <property type="project" value="UniProtKB-UniRule"/>
</dbReference>
<dbReference type="GO" id="GO:0034599">
    <property type="term" value="P:cellular response to oxidative stress"/>
    <property type="evidence" value="ECO:0007669"/>
    <property type="project" value="TreeGrafter"/>
</dbReference>
<dbReference type="Gene3D" id="1.10.3880.10">
    <property type="entry name" value="Fe(II) trafficking protein YggX"/>
    <property type="match status" value="1"/>
</dbReference>
<dbReference type="HAMAP" id="MF_00686">
    <property type="entry name" value="Fe_traffic_YggX"/>
    <property type="match status" value="1"/>
</dbReference>
<dbReference type="InterPro" id="IPR007457">
    <property type="entry name" value="Fe_traffick_prot_YggX"/>
</dbReference>
<dbReference type="InterPro" id="IPR036766">
    <property type="entry name" value="Fe_traffick_prot_YggX_sf"/>
</dbReference>
<dbReference type="NCBIfam" id="NF003817">
    <property type="entry name" value="PRK05408.1"/>
    <property type="match status" value="1"/>
</dbReference>
<dbReference type="PANTHER" id="PTHR36965">
    <property type="entry name" value="FE(2+)-TRAFFICKING PROTEIN-RELATED"/>
    <property type="match status" value="1"/>
</dbReference>
<dbReference type="PANTHER" id="PTHR36965:SF1">
    <property type="entry name" value="FE(2+)-TRAFFICKING PROTEIN-RELATED"/>
    <property type="match status" value="1"/>
</dbReference>
<dbReference type="Pfam" id="PF04362">
    <property type="entry name" value="Iron_traffic"/>
    <property type="match status" value="1"/>
</dbReference>
<dbReference type="PIRSF" id="PIRSF029827">
    <property type="entry name" value="Fe_traffic_YggX"/>
    <property type="match status" value="1"/>
</dbReference>
<dbReference type="SUPFAM" id="SSF111148">
    <property type="entry name" value="YggX-like"/>
    <property type="match status" value="1"/>
</dbReference>
<organism>
    <name type="scientific">Blochmanniella floridana</name>
    <dbReference type="NCBI Taxonomy" id="203907"/>
    <lineage>
        <taxon>Bacteria</taxon>
        <taxon>Pseudomonadati</taxon>
        <taxon>Pseudomonadota</taxon>
        <taxon>Gammaproteobacteria</taxon>
        <taxon>Enterobacterales</taxon>
        <taxon>Enterobacteriaceae</taxon>
        <taxon>ant endosymbionts</taxon>
        <taxon>Candidatus Blochmanniella</taxon>
    </lineage>
</organism>
<keyword id="KW-0408">Iron</keyword>
<keyword id="KW-1185">Reference proteome</keyword>
<reference key="1">
    <citation type="journal article" date="2003" name="Proc. Natl. Acad. Sci. U.S.A.">
        <title>The genome sequence of Blochmannia floridanus: comparative analysis of reduced genomes.</title>
        <authorList>
            <person name="Gil R."/>
            <person name="Silva F.J."/>
            <person name="Zientz E."/>
            <person name="Delmotte F."/>
            <person name="Gonzalez-Candelas F."/>
            <person name="Latorre A."/>
            <person name="Rausell C."/>
            <person name="Kamerbeek J."/>
            <person name="Gadau J."/>
            <person name="Hoelldobler B."/>
            <person name="van Ham R.C.H.J."/>
            <person name="Gross R."/>
            <person name="Moya A."/>
        </authorList>
    </citation>
    <scope>NUCLEOTIDE SEQUENCE [LARGE SCALE GENOMIC DNA]</scope>
</reference>
<name>FETP_BLOFL</name>
<proteinExistence type="inferred from homology"/>